<organism>
    <name type="scientific">Escherichia coli</name>
    <dbReference type="NCBI Taxonomy" id="562"/>
    <lineage>
        <taxon>Bacteria</taxon>
        <taxon>Pseudomonadati</taxon>
        <taxon>Pseudomonadota</taxon>
        <taxon>Gammaproteobacteria</taxon>
        <taxon>Enterobacterales</taxon>
        <taxon>Enterobacteriaceae</taxon>
        <taxon>Escherichia</taxon>
    </lineage>
</organism>
<feature type="chain" id="PRO_0000402179" description="3-phenylpropionate-dihydrodiol/cinnamic acid-dihydrodiol dehydrogenase">
    <location>
        <begin position="1"/>
        <end position="270"/>
    </location>
</feature>
<feature type="active site" description="Proton acceptor" evidence="1">
    <location>
        <position position="156"/>
    </location>
</feature>
<feature type="binding site" evidence="1">
    <location>
        <begin position="10"/>
        <end position="34"/>
    </location>
    <ligand>
        <name>NAD(+)</name>
        <dbReference type="ChEBI" id="CHEBI:57540"/>
    </ligand>
</feature>
<feature type="binding site" evidence="1">
    <location>
        <position position="143"/>
    </location>
    <ligand>
        <name>substrate</name>
    </ligand>
</feature>
<gene>
    <name type="primary">hcaB</name>
</gene>
<reference key="1">
    <citation type="journal article" date="1998" name="J. Bacteriol.">
        <title>Characterization of the hca cluster encoding the dioxygenolytic pathway for initial catabolism of 3-phenylpropionic acid in Escherichia coli K-12.</title>
        <authorList>
            <person name="Diaz E."/>
            <person name="Ferrandez A."/>
            <person name="Garcia J.L."/>
        </authorList>
    </citation>
    <scope>NUCLEOTIDE SEQUENCE [GENOMIC DNA]</scope>
    <scope>FUNCTION IN CATABOLISM OF PHENYLPROPIONIC AND CINNAMIC ACIDS</scope>
    <scope>CATALYTIC ACTIVITY</scope>
    <source>
        <strain>K12 / MC1061 / ATCC 53338 / DSM 7140</strain>
    </source>
</reference>
<proteinExistence type="evidence at protein level"/>
<name>HCAB_ECOLX</name>
<sequence length="270" mass="28499">MSDLHNESIFITGGGSGLGLALVERFIEKGAQVATLELSAAKVASLRQRFGEHILAVEGNVTCYADYQRAVDQILTRSGKLDCFIGNAGIWDHNASLVNTPAETLETGFHELFNVNVLGYLLGAKACAPALIASEGSMIFTLSNAAWYPGGGGPLYTASKHAATGLIRQLAYELAPKVRVNGVGPCGMASDLRGPQALGQSETSIMQSLTPEKIAAILPLQFFPQPADFTGPYVMLTSRRNNRALSGVMINADAGLAIRGIRHVAAGLDL</sequence>
<dbReference type="EC" id="1.3.1.87"/>
<dbReference type="EMBL" id="Y11070">
    <property type="protein sequence ID" value="CAA71951.1"/>
    <property type="molecule type" value="Genomic_DNA"/>
</dbReference>
<dbReference type="SMR" id="P0CI32"/>
<dbReference type="STRING" id="585034.ECIAI1_2593"/>
<dbReference type="eggNOG" id="COG1028">
    <property type="taxonomic scope" value="Bacteria"/>
</dbReference>
<dbReference type="UniPathway" id="UPA00714"/>
<dbReference type="GO" id="GO:0018498">
    <property type="term" value="F:2,3-dihydroxy-2,3-dihydro-phenylpropionate dehydrogenase activity"/>
    <property type="evidence" value="ECO:0007669"/>
    <property type="project" value="UniProtKB-UniRule"/>
</dbReference>
<dbReference type="GO" id="GO:0019380">
    <property type="term" value="P:3-phenylpropionate catabolic process"/>
    <property type="evidence" value="ECO:0007669"/>
    <property type="project" value="UniProtKB-UniRule"/>
</dbReference>
<dbReference type="CDD" id="cd05348">
    <property type="entry name" value="BphB-like_SDR_c"/>
    <property type="match status" value="1"/>
</dbReference>
<dbReference type="FunFam" id="3.40.50.720:FF:000151">
    <property type="entry name" value="3-phenylpropionate-dihydrodiol/cinnamic acid-dihydrodiol dehydrogenase"/>
    <property type="match status" value="1"/>
</dbReference>
<dbReference type="Gene3D" id="3.40.50.720">
    <property type="entry name" value="NAD(P)-binding Rossmann-like Domain"/>
    <property type="match status" value="1"/>
</dbReference>
<dbReference type="HAMAP" id="MF_01647">
    <property type="entry name" value="HcaB"/>
    <property type="match status" value="1"/>
</dbReference>
<dbReference type="InterPro" id="IPR047950">
    <property type="entry name" value="BphB-like_SDR"/>
</dbReference>
<dbReference type="InterPro" id="IPR023643">
    <property type="entry name" value="Dihydrodiol_DH_HcaB"/>
</dbReference>
<dbReference type="InterPro" id="IPR036291">
    <property type="entry name" value="NAD(P)-bd_dom_sf"/>
</dbReference>
<dbReference type="InterPro" id="IPR020904">
    <property type="entry name" value="Sc_DH/Rdtase_CS"/>
</dbReference>
<dbReference type="InterPro" id="IPR002347">
    <property type="entry name" value="SDR_fam"/>
</dbReference>
<dbReference type="NCBIfam" id="NF042950">
    <property type="entry name" value="3PPDhyd_Dh_HcaB"/>
    <property type="match status" value="1"/>
</dbReference>
<dbReference type="NCBIfam" id="NF004849">
    <property type="entry name" value="PRK06200.1"/>
    <property type="match status" value="1"/>
</dbReference>
<dbReference type="PANTHER" id="PTHR43943:SF17">
    <property type="entry name" value="3-PHENYLPROPIONATE-DIHYDRODIOL_CINNAMIC ACID-DIHYDRODIOL DEHYDROGENASE"/>
    <property type="match status" value="1"/>
</dbReference>
<dbReference type="PANTHER" id="PTHR43943">
    <property type="entry name" value="DEHYDROGENASE/REDUCTASE (SDR FAMILY) MEMBER 4"/>
    <property type="match status" value="1"/>
</dbReference>
<dbReference type="Pfam" id="PF00106">
    <property type="entry name" value="adh_short"/>
    <property type="match status" value="1"/>
</dbReference>
<dbReference type="PRINTS" id="PR00081">
    <property type="entry name" value="GDHRDH"/>
</dbReference>
<dbReference type="PRINTS" id="PR00080">
    <property type="entry name" value="SDRFAMILY"/>
</dbReference>
<dbReference type="SUPFAM" id="SSF51735">
    <property type="entry name" value="NAD(P)-binding Rossmann-fold domains"/>
    <property type="match status" value="1"/>
</dbReference>
<dbReference type="PROSITE" id="PS00061">
    <property type="entry name" value="ADH_SHORT"/>
    <property type="match status" value="1"/>
</dbReference>
<comment type="function">
    <text evidence="2">Converts 3-phenylpropionate-dihydrodiol (PP-dihydrodiol) and cinnamic acid-dihydrodiol (CI-dihydrodiol) into 3-(2,3-dihydroxylphenyl)propanoic acid (DHPP) and 2,3-dihydroxicinnamic acid (DHCI), respectively.</text>
</comment>
<comment type="catalytic activity">
    <reaction evidence="2">
        <text>3-(cis-5,6-dihydroxycyclohexa-1,3-dien-1-yl)propanoate + NAD(+) = 3-(2,3-dihydroxyphenyl)propanoate + NADH + H(+)</text>
        <dbReference type="Rhea" id="RHEA:25062"/>
        <dbReference type="ChEBI" id="CHEBI:15378"/>
        <dbReference type="ChEBI" id="CHEBI:46951"/>
        <dbReference type="ChEBI" id="CHEBI:57540"/>
        <dbReference type="ChEBI" id="CHEBI:57945"/>
        <dbReference type="ChEBI" id="CHEBI:60087"/>
        <dbReference type="EC" id="1.3.1.87"/>
    </reaction>
</comment>
<comment type="catalytic activity">
    <reaction evidence="2">
        <text>(2E)-3-(cis-5,6-dihydroxycyclohexa-1,3-dien-1-yl)prop-2-enoate + NAD(+) = (2E)-3-(2,3-dihydroxyphenyl)prop-2-enoate + NADH + H(+)</text>
        <dbReference type="Rhea" id="RHEA:25066"/>
        <dbReference type="ChEBI" id="CHEBI:15378"/>
        <dbReference type="ChEBI" id="CHEBI:57540"/>
        <dbReference type="ChEBI" id="CHEBI:57945"/>
        <dbReference type="ChEBI" id="CHEBI:58642"/>
        <dbReference type="ChEBI" id="CHEBI:61451"/>
        <dbReference type="EC" id="1.3.1.87"/>
    </reaction>
</comment>
<comment type="pathway">
    <text>Aromatic compound metabolism; 3-phenylpropanoate degradation.</text>
</comment>
<comment type="similarity">
    <text evidence="3">Belongs to the short-chain dehydrogenases/reductases (SDR) family.</text>
</comment>
<evidence type="ECO:0000250" key="1"/>
<evidence type="ECO:0000269" key="2">
    <source>
    </source>
</evidence>
<evidence type="ECO:0000305" key="3"/>
<protein>
    <recommendedName>
        <fullName>3-phenylpropionate-dihydrodiol/cinnamic acid-dihydrodiol dehydrogenase</fullName>
        <ecNumber>1.3.1.87</ecNumber>
    </recommendedName>
    <alternativeName>
        <fullName>2,3-dihydroxy-2,3-dihydrophenylpropionate dehydrogenase</fullName>
    </alternativeName>
    <alternativeName>
        <fullName>3-(cis-5,6-dihydroxycyclohexa-1,3-dien-1-yl)propanoate dehydrogenase</fullName>
    </alternativeName>
    <alternativeName>
        <fullName>CI-dihydrodiol dehydrogenase</fullName>
    </alternativeName>
    <alternativeName>
        <fullName>Cis-3-(2-carboxyethenyl)-3,5-cyclohexadiene-1,2-diol dehydrogenase</fullName>
    </alternativeName>
    <alternativeName>
        <fullName>Cis-3-(2-carboxyethyl)-3,5-cyclohexadiene-1,2-diol dehydrogenase</fullName>
    </alternativeName>
    <alternativeName>
        <fullName>PP-dihydrodiol dehydrogenase</fullName>
    </alternativeName>
</protein>
<keyword id="KW-0058">Aromatic hydrocarbons catabolism</keyword>
<keyword id="KW-0520">NAD</keyword>
<keyword id="KW-0560">Oxidoreductase</keyword>
<accession>P0CI32</accession>
<accession>P76995</accession>
<accession>P77646</accession>